<proteinExistence type="predicted"/>
<dbReference type="EMBL" id="M18275">
    <property type="protein sequence ID" value="AAA35276.1"/>
    <property type="molecule type" value="Genomic_DNA"/>
</dbReference>
<dbReference type="RefSeq" id="NP_040492.1">
    <property type="nucleotide sequence ID" value="NC_002054.1"/>
</dbReference>
<sequence length="260" mass="30438">MDWKIDTSDLTATRYYAYSASDALVVLLRRICSPYATRRFDSSSCNKMSQTDYPQYEIKTGTDVSQNRDLSFDYMKKPTKSTAKVLRGVGVIDEWFAKRLLGPRGSNPDLPFAALLCRDELYREWITLIRMLTLVLKHVPKAKVKEAHDMILELYPNYRRRNIFIPEIKESDIHDIKNALRSLVRQLSSRTNILEWPEAAKYPTLFEELVREKRSQETQKTSSTKNLLNRRNARKRRRLSSDMAAERPAGKWKNRLRSTQ</sequence>
<accession>P13740</accession>
<protein>
    <recommendedName>
        <fullName>Uncharacterized protein A</fullName>
    </recommendedName>
</protein>
<geneLocation type="plasmid">
    <name>pSM1</name>
</geneLocation>
<name>YA_LACFM</name>
<gene>
    <name type="primary">A</name>
</gene>
<keyword id="KW-0614">Plasmid</keyword>
<organism>
    <name type="scientific">Lachancea fermentati</name>
    <name type="common">Zygosaccharomyces fermentati</name>
    <dbReference type="NCBI Taxonomy" id="4955"/>
    <lineage>
        <taxon>Eukaryota</taxon>
        <taxon>Fungi</taxon>
        <taxon>Dikarya</taxon>
        <taxon>Ascomycota</taxon>
        <taxon>Saccharomycotina</taxon>
        <taxon>Saccharomycetes</taxon>
        <taxon>Saccharomycetales</taxon>
        <taxon>Saccharomycetaceae</taxon>
        <taxon>Lachancea</taxon>
    </lineage>
</organism>
<reference key="1">
    <citation type="journal article" date="1987" name="J. Bacteriol.">
        <title>Yeast plasmids resembling 2 micron DNA: regional similarities and diversities at the molecular level.</title>
        <authorList>
            <person name="Utatsu I."/>
            <person name="Sakamoto S."/>
            <person name="Imura T."/>
            <person name="Toh-e A."/>
        </authorList>
    </citation>
    <scope>NUCLEOTIDE SEQUENCE [GENOMIC DNA]</scope>
    <source>
        <strain>NBRC 0021</strain>
    </source>
</reference>
<evidence type="ECO:0000256" key="1">
    <source>
        <dbReference type="SAM" id="MobiDB-lite"/>
    </source>
</evidence>
<feature type="chain" id="PRO_0000150904" description="Uncharacterized protein A">
    <location>
        <begin position="1"/>
        <end position="260"/>
    </location>
</feature>
<feature type="region of interest" description="Disordered" evidence="1">
    <location>
        <begin position="213"/>
        <end position="260"/>
    </location>
</feature>
<feature type="compositionally biased region" description="Basic residues" evidence="1">
    <location>
        <begin position="250"/>
        <end position="260"/>
    </location>
</feature>